<sequence length="145" mass="15919">MIALIQRVTQAKVDIAGVTVGAINHGLLVLLGVEKDDNQQKAKRLCEKVCGYRIFSDENDKMNLNVQQAGGSLLVVSQFTLAAETQKGMRPGFSNGAPPEMAENLYHYFVEQCKQQGLETQTGQFAADMQVTLTNDGPVTFWLQV</sequence>
<dbReference type="EC" id="3.1.1.96" evidence="1"/>
<dbReference type="EMBL" id="AM942759">
    <property type="protein sequence ID" value="CAR45661.1"/>
    <property type="molecule type" value="Genomic_DNA"/>
</dbReference>
<dbReference type="RefSeq" id="WP_004246810.1">
    <property type="nucleotide sequence ID" value="NC_010554.1"/>
</dbReference>
<dbReference type="SMR" id="B4EZB4"/>
<dbReference type="EnsemblBacteria" id="CAR45661">
    <property type="protein sequence ID" value="CAR45661"/>
    <property type="gene ID" value="PMI2874"/>
</dbReference>
<dbReference type="GeneID" id="6801952"/>
<dbReference type="KEGG" id="pmr:PMI2874"/>
<dbReference type="eggNOG" id="COG1490">
    <property type="taxonomic scope" value="Bacteria"/>
</dbReference>
<dbReference type="HOGENOM" id="CLU_076901_1_1_6"/>
<dbReference type="Proteomes" id="UP000008319">
    <property type="component" value="Chromosome"/>
</dbReference>
<dbReference type="GO" id="GO:0005737">
    <property type="term" value="C:cytoplasm"/>
    <property type="evidence" value="ECO:0007669"/>
    <property type="project" value="UniProtKB-SubCell"/>
</dbReference>
<dbReference type="GO" id="GO:0051500">
    <property type="term" value="F:D-tyrosyl-tRNA(Tyr) deacylase activity"/>
    <property type="evidence" value="ECO:0007669"/>
    <property type="project" value="TreeGrafter"/>
</dbReference>
<dbReference type="GO" id="GO:0106026">
    <property type="term" value="F:Gly-tRNA(Ala) deacylase activity"/>
    <property type="evidence" value="ECO:0007669"/>
    <property type="project" value="UniProtKB-UniRule"/>
</dbReference>
<dbReference type="GO" id="GO:0043908">
    <property type="term" value="F:Ser(Gly)-tRNA(Ala) hydrolase activity"/>
    <property type="evidence" value="ECO:0007669"/>
    <property type="project" value="UniProtKB-UniRule"/>
</dbReference>
<dbReference type="GO" id="GO:0000049">
    <property type="term" value="F:tRNA binding"/>
    <property type="evidence" value="ECO:0007669"/>
    <property type="project" value="UniProtKB-UniRule"/>
</dbReference>
<dbReference type="GO" id="GO:0019478">
    <property type="term" value="P:D-amino acid catabolic process"/>
    <property type="evidence" value="ECO:0007669"/>
    <property type="project" value="UniProtKB-UniRule"/>
</dbReference>
<dbReference type="CDD" id="cd00563">
    <property type="entry name" value="Dtyr_deacylase"/>
    <property type="match status" value="1"/>
</dbReference>
<dbReference type="FunFam" id="3.50.80.10:FF:000001">
    <property type="entry name" value="D-aminoacyl-tRNA deacylase"/>
    <property type="match status" value="1"/>
</dbReference>
<dbReference type="Gene3D" id="3.50.80.10">
    <property type="entry name" value="D-tyrosyl-tRNA(Tyr) deacylase"/>
    <property type="match status" value="1"/>
</dbReference>
<dbReference type="HAMAP" id="MF_00518">
    <property type="entry name" value="Deacylase_Dtd"/>
    <property type="match status" value="1"/>
</dbReference>
<dbReference type="InterPro" id="IPR003732">
    <property type="entry name" value="Daa-tRNA_deacyls_DTD"/>
</dbReference>
<dbReference type="InterPro" id="IPR023509">
    <property type="entry name" value="DTD-like_sf"/>
</dbReference>
<dbReference type="NCBIfam" id="TIGR00256">
    <property type="entry name" value="D-aminoacyl-tRNA deacylase"/>
    <property type="match status" value="1"/>
</dbReference>
<dbReference type="PANTHER" id="PTHR10472:SF5">
    <property type="entry name" value="D-AMINOACYL-TRNA DEACYLASE 1"/>
    <property type="match status" value="1"/>
</dbReference>
<dbReference type="PANTHER" id="PTHR10472">
    <property type="entry name" value="D-TYROSYL-TRNA TYR DEACYLASE"/>
    <property type="match status" value="1"/>
</dbReference>
<dbReference type="Pfam" id="PF02580">
    <property type="entry name" value="Tyr_Deacylase"/>
    <property type="match status" value="1"/>
</dbReference>
<dbReference type="SUPFAM" id="SSF69500">
    <property type="entry name" value="DTD-like"/>
    <property type="match status" value="1"/>
</dbReference>
<comment type="function">
    <text evidence="1">An aminoacyl-tRNA editing enzyme that deacylates mischarged D-aminoacyl-tRNAs. Also deacylates mischarged glycyl-tRNA(Ala), protecting cells against glycine mischarging by AlaRS. Acts via tRNA-based rather than protein-based catalysis; rejects L-amino acids rather than detecting D-amino acids in the active site. By recycling D-aminoacyl-tRNA to D-amino acids and free tRNA molecules, this enzyme counteracts the toxicity associated with the formation of D-aminoacyl-tRNA entities in vivo and helps enforce protein L-homochirality.</text>
</comment>
<comment type="catalytic activity">
    <reaction evidence="1">
        <text>glycyl-tRNA(Ala) + H2O = tRNA(Ala) + glycine + H(+)</text>
        <dbReference type="Rhea" id="RHEA:53744"/>
        <dbReference type="Rhea" id="RHEA-COMP:9657"/>
        <dbReference type="Rhea" id="RHEA-COMP:13640"/>
        <dbReference type="ChEBI" id="CHEBI:15377"/>
        <dbReference type="ChEBI" id="CHEBI:15378"/>
        <dbReference type="ChEBI" id="CHEBI:57305"/>
        <dbReference type="ChEBI" id="CHEBI:78442"/>
        <dbReference type="ChEBI" id="CHEBI:78522"/>
        <dbReference type="EC" id="3.1.1.96"/>
    </reaction>
</comment>
<comment type="catalytic activity">
    <reaction evidence="1">
        <text>a D-aminoacyl-tRNA + H2O = a tRNA + a D-alpha-amino acid + H(+)</text>
        <dbReference type="Rhea" id="RHEA:13953"/>
        <dbReference type="Rhea" id="RHEA-COMP:10123"/>
        <dbReference type="Rhea" id="RHEA-COMP:10124"/>
        <dbReference type="ChEBI" id="CHEBI:15377"/>
        <dbReference type="ChEBI" id="CHEBI:15378"/>
        <dbReference type="ChEBI" id="CHEBI:59871"/>
        <dbReference type="ChEBI" id="CHEBI:78442"/>
        <dbReference type="ChEBI" id="CHEBI:79333"/>
        <dbReference type="EC" id="3.1.1.96"/>
    </reaction>
</comment>
<comment type="subunit">
    <text evidence="1">Homodimer.</text>
</comment>
<comment type="subcellular location">
    <subcellularLocation>
        <location evidence="1">Cytoplasm</location>
    </subcellularLocation>
</comment>
<comment type="domain">
    <text evidence="1">A Gly-cisPro motif from one monomer fits into the active site of the other monomer to allow specific chiral rejection of L-amino acids.</text>
</comment>
<comment type="similarity">
    <text evidence="1">Belongs to the DTD family.</text>
</comment>
<evidence type="ECO:0000255" key="1">
    <source>
        <dbReference type="HAMAP-Rule" id="MF_00518"/>
    </source>
</evidence>
<proteinExistence type="inferred from homology"/>
<accession>B4EZB4</accession>
<organism>
    <name type="scientific">Proteus mirabilis (strain HI4320)</name>
    <dbReference type="NCBI Taxonomy" id="529507"/>
    <lineage>
        <taxon>Bacteria</taxon>
        <taxon>Pseudomonadati</taxon>
        <taxon>Pseudomonadota</taxon>
        <taxon>Gammaproteobacteria</taxon>
        <taxon>Enterobacterales</taxon>
        <taxon>Morganellaceae</taxon>
        <taxon>Proteus</taxon>
    </lineage>
</organism>
<reference key="1">
    <citation type="journal article" date="2008" name="J. Bacteriol.">
        <title>Complete genome sequence of uropathogenic Proteus mirabilis, a master of both adherence and motility.</title>
        <authorList>
            <person name="Pearson M.M."/>
            <person name="Sebaihia M."/>
            <person name="Churcher C."/>
            <person name="Quail M.A."/>
            <person name="Seshasayee A.S."/>
            <person name="Luscombe N.M."/>
            <person name="Abdellah Z."/>
            <person name="Arrosmith C."/>
            <person name="Atkin B."/>
            <person name="Chillingworth T."/>
            <person name="Hauser H."/>
            <person name="Jagels K."/>
            <person name="Moule S."/>
            <person name="Mungall K."/>
            <person name="Norbertczak H."/>
            <person name="Rabbinowitsch E."/>
            <person name="Walker D."/>
            <person name="Whithead S."/>
            <person name="Thomson N.R."/>
            <person name="Rather P.N."/>
            <person name="Parkhill J."/>
            <person name="Mobley H.L.T."/>
        </authorList>
    </citation>
    <scope>NUCLEOTIDE SEQUENCE [LARGE SCALE GENOMIC DNA]</scope>
    <source>
        <strain>HI4320</strain>
    </source>
</reference>
<keyword id="KW-0963">Cytoplasm</keyword>
<keyword id="KW-0378">Hydrolase</keyword>
<keyword id="KW-1185">Reference proteome</keyword>
<keyword id="KW-0694">RNA-binding</keyword>
<keyword id="KW-0820">tRNA-binding</keyword>
<gene>
    <name evidence="1" type="primary">dtd</name>
    <name type="ordered locus">PMI2874</name>
</gene>
<protein>
    <recommendedName>
        <fullName evidence="1">D-aminoacyl-tRNA deacylase</fullName>
        <shortName evidence="1">DTD</shortName>
        <ecNumber evidence="1">3.1.1.96</ecNumber>
    </recommendedName>
    <alternativeName>
        <fullName evidence="1">Gly-tRNA(Ala) deacylase</fullName>
    </alternativeName>
</protein>
<name>DTD_PROMH</name>
<feature type="chain" id="PRO_1000127559" description="D-aminoacyl-tRNA deacylase">
    <location>
        <begin position="1"/>
        <end position="145"/>
    </location>
</feature>
<feature type="short sequence motif" description="Gly-cisPro motif, important for rejection of L-amino acids" evidence="1">
    <location>
        <begin position="137"/>
        <end position="138"/>
    </location>
</feature>